<accession>Q1CNS3</accession>
<accession>D1Q340</accession>
<feature type="chain" id="PRO_1000064325" description="Protein PsiE homolog">
    <location>
        <begin position="1"/>
        <end position="135"/>
    </location>
</feature>
<feature type="transmembrane region" description="Helical" evidence="1">
    <location>
        <begin position="20"/>
        <end position="40"/>
    </location>
</feature>
<feature type="transmembrane region" description="Helical" evidence="1">
    <location>
        <begin position="54"/>
        <end position="74"/>
    </location>
</feature>
<feature type="transmembrane region" description="Helical" evidence="1">
    <location>
        <begin position="82"/>
        <end position="102"/>
    </location>
</feature>
<feature type="transmembrane region" description="Helical" evidence="1">
    <location>
        <begin position="107"/>
        <end position="127"/>
    </location>
</feature>
<gene>
    <name evidence="1" type="primary">psiE</name>
    <name type="ordered locus">YPN_0024</name>
    <name type="ORF">YP516_4560</name>
</gene>
<organism>
    <name type="scientific">Yersinia pestis bv. Antiqua (strain Nepal516)</name>
    <dbReference type="NCBI Taxonomy" id="377628"/>
    <lineage>
        <taxon>Bacteria</taxon>
        <taxon>Pseudomonadati</taxon>
        <taxon>Pseudomonadota</taxon>
        <taxon>Gammaproteobacteria</taxon>
        <taxon>Enterobacterales</taxon>
        <taxon>Yersiniaceae</taxon>
        <taxon>Yersinia</taxon>
    </lineage>
</organism>
<name>PSIE_YERPN</name>
<sequence length="135" mass="15648">MAKNSRSQWIAKNLQRLLNVGLIMLAAILVVFLVKETIHLGKVLFLSNQETSSYMLIEGIVIYFLYFEFIALIVKYFESGYHFPLRYFIYIGITAIIRLIIVDHENPIDTLIYSGSILVLVVTLYLANTERLKRE</sequence>
<keyword id="KW-0997">Cell inner membrane</keyword>
<keyword id="KW-1003">Cell membrane</keyword>
<keyword id="KW-0472">Membrane</keyword>
<keyword id="KW-0812">Transmembrane</keyword>
<keyword id="KW-1133">Transmembrane helix</keyword>
<proteinExistence type="inferred from homology"/>
<protein>
    <recommendedName>
        <fullName evidence="1">Protein PsiE homolog</fullName>
    </recommendedName>
</protein>
<comment type="subcellular location">
    <subcellularLocation>
        <location evidence="1">Cell inner membrane</location>
        <topology evidence="1">Multi-pass membrane protein</topology>
    </subcellularLocation>
</comment>
<comment type="similarity">
    <text evidence="1">Belongs to the PsiE family.</text>
</comment>
<reference key="1">
    <citation type="journal article" date="2006" name="J. Bacteriol.">
        <title>Complete genome sequence of Yersinia pestis strains Antiqua and Nepal516: evidence of gene reduction in an emerging pathogen.</title>
        <authorList>
            <person name="Chain P.S.G."/>
            <person name="Hu P."/>
            <person name="Malfatti S.A."/>
            <person name="Radnedge L."/>
            <person name="Larimer F."/>
            <person name="Vergez L.M."/>
            <person name="Worsham P."/>
            <person name="Chu M.C."/>
            <person name="Andersen G.L."/>
        </authorList>
    </citation>
    <scope>NUCLEOTIDE SEQUENCE [LARGE SCALE GENOMIC DNA]</scope>
    <source>
        <strain>Nepal516</strain>
    </source>
</reference>
<reference key="2">
    <citation type="submission" date="2009-04" db="EMBL/GenBank/DDBJ databases">
        <title>Yersinia pestis Nepal516A whole genome shotgun sequencing project.</title>
        <authorList>
            <person name="Plunkett G. III"/>
            <person name="Anderson B.D."/>
            <person name="Baumler D.J."/>
            <person name="Burland V."/>
            <person name="Cabot E.L."/>
            <person name="Glasner J.D."/>
            <person name="Mau B."/>
            <person name="Neeno-Eckwall E."/>
            <person name="Perna N.T."/>
            <person name="Munk A.C."/>
            <person name="Tapia R."/>
            <person name="Green L.D."/>
            <person name="Rogers Y.C."/>
            <person name="Detter J.C."/>
            <person name="Bruce D.C."/>
            <person name="Brettin T.S."/>
        </authorList>
    </citation>
    <scope>NUCLEOTIDE SEQUENCE [LARGE SCALE GENOMIC DNA]</scope>
    <source>
        <strain>Nepal516</strain>
    </source>
</reference>
<dbReference type="EMBL" id="CP000305">
    <property type="protein sequence ID" value="ABG16357.1"/>
    <property type="molecule type" value="Genomic_DNA"/>
</dbReference>
<dbReference type="EMBL" id="ACNQ01000019">
    <property type="protein sequence ID" value="EEO74943.1"/>
    <property type="molecule type" value="Genomic_DNA"/>
</dbReference>
<dbReference type="RefSeq" id="WP_002212086.1">
    <property type="nucleotide sequence ID" value="NZ_ACNQ01000019.1"/>
</dbReference>
<dbReference type="SMR" id="Q1CNS3"/>
<dbReference type="GeneID" id="96663139"/>
<dbReference type="KEGG" id="ypn:YPN_0024"/>
<dbReference type="HOGENOM" id="CLU_127561_0_0_6"/>
<dbReference type="Proteomes" id="UP000008936">
    <property type="component" value="Chromosome"/>
</dbReference>
<dbReference type="GO" id="GO:0005886">
    <property type="term" value="C:plasma membrane"/>
    <property type="evidence" value="ECO:0007669"/>
    <property type="project" value="UniProtKB-SubCell"/>
</dbReference>
<dbReference type="GO" id="GO:0016036">
    <property type="term" value="P:cellular response to phosphate starvation"/>
    <property type="evidence" value="ECO:0007669"/>
    <property type="project" value="InterPro"/>
</dbReference>
<dbReference type="HAMAP" id="MF_01048">
    <property type="entry name" value="PsiE"/>
    <property type="match status" value="1"/>
</dbReference>
<dbReference type="InterPro" id="IPR009315">
    <property type="entry name" value="P_starv_induced_PsiE"/>
</dbReference>
<dbReference type="InterPro" id="IPR020948">
    <property type="entry name" value="P_starv_induced_PsiE-like"/>
</dbReference>
<dbReference type="NCBIfam" id="NF002764">
    <property type="entry name" value="PRK02833.1-2"/>
    <property type="match status" value="1"/>
</dbReference>
<dbReference type="NCBIfam" id="NF002765">
    <property type="entry name" value="PRK02833.1-3"/>
    <property type="match status" value="1"/>
</dbReference>
<dbReference type="PANTHER" id="PTHR37819">
    <property type="entry name" value="PROTEIN PSIE"/>
    <property type="match status" value="1"/>
</dbReference>
<dbReference type="PANTHER" id="PTHR37819:SF1">
    <property type="entry name" value="PROTEIN PSIE"/>
    <property type="match status" value="1"/>
</dbReference>
<dbReference type="Pfam" id="PF06146">
    <property type="entry name" value="PsiE"/>
    <property type="match status" value="1"/>
</dbReference>
<dbReference type="PIRSF" id="PIRSF029598">
    <property type="entry name" value="PsiE"/>
    <property type="match status" value="1"/>
</dbReference>
<evidence type="ECO:0000255" key="1">
    <source>
        <dbReference type="HAMAP-Rule" id="MF_01048"/>
    </source>
</evidence>